<evidence type="ECO:0000250" key="1">
    <source>
        <dbReference type="UniProtKB" id="P9WEW5"/>
    </source>
</evidence>
<evidence type="ECO:0000250" key="2">
    <source>
        <dbReference type="UniProtKB" id="Q5JIZ5"/>
    </source>
</evidence>
<evidence type="ECO:0000250" key="3">
    <source>
        <dbReference type="UniProtKB" id="Q9P8G3"/>
    </source>
</evidence>
<evidence type="ECO:0000250" key="4">
    <source>
        <dbReference type="UniProtKB" id="Q9Y749"/>
    </source>
</evidence>
<evidence type="ECO:0000255" key="5"/>
<evidence type="ECO:0000255" key="6">
    <source>
        <dbReference type="PROSITE-ProRule" id="PRU00498"/>
    </source>
</evidence>
<evidence type="ECO:0000255" key="7">
    <source>
        <dbReference type="PROSITE-ProRule" id="PRU01240"/>
    </source>
</evidence>
<evidence type="ECO:0000305" key="8"/>
<reference key="1">
    <citation type="journal article" date="2014" name="Genome Announc.">
        <title>Complete sequencing and chromosome-scale genome assembly of the industrial progenitor strain P2niaD18 from the penicillin producer Penicillium chrysogenum.</title>
        <authorList>
            <person name="Specht T."/>
            <person name="Dahlmann T.A."/>
            <person name="Zadra I."/>
            <person name="Kuernsteiner H."/>
            <person name="Kueck U."/>
        </authorList>
    </citation>
    <scope>NUCLEOTIDE SEQUENCE [LARGE SCALE GENOMIC DNA]</scope>
    <source>
        <strain>P2niaD18</strain>
    </source>
</reference>
<keyword id="KW-0325">Glycoprotein</keyword>
<keyword id="KW-0378">Hydrolase</keyword>
<keyword id="KW-0389">IgE-binding protein</keyword>
<keyword id="KW-0645">Protease</keyword>
<keyword id="KW-0720">Serine protease</keyword>
<keyword id="KW-0732">Signal</keyword>
<keyword id="KW-0865">Zymogen</keyword>
<comment type="function">
    <text evidence="4">Serine protease.</text>
</comment>
<comment type="similarity">
    <text evidence="8">Belongs to the peptidase S8 family.</text>
</comment>
<feature type="signal peptide" evidence="5">
    <location>
        <begin position="1"/>
        <end position="16"/>
    </location>
</feature>
<feature type="propeptide" id="PRO_0000451345" description="Removed in mature form" evidence="1">
    <location>
        <begin position="17"/>
        <end position="136"/>
    </location>
</feature>
<feature type="chain" id="PRO_0000451346" description="Subtilisin-like serine protease EN45_078720" evidence="1">
    <location>
        <begin position="137"/>
        <end position="453"/>
    </location>
</feature>
<feature type="propeptide" id="PRO_0000451440" description="Removed in mature form" evidence="8">
    <location>
        <begin position="454"/>
        <end position="494"/>
    </location>
</feature>
<feature type="domain" description="Inhibitor I9" evidence="5">
    <location>
        <begin position="43"/>
        <end position="136"/>
    </location>
</feature>
<feature type="domain" description="Peptidase S8" evidence="7">
    <location>
        <begin position="146"/>
        <end position="448"/>
    </location>
</feature>
<feature type="region of interest" description="IgE-binding" evidence="3">
    <location>
        <begin position="180"/>
        <end position="198"/>
    </location>
</feature>
<feature type="region of interest" description="IgE-binding" evidence="1">
    <location>
        <begin position="209"/>
        <end position="231"/>
    </location>
</feature>
<feature type="active site" description="Charge relay system" evidence="7">
    <location>
        <position position="182"/>
    </location>
</feature>
<feature type="active site" description="Charge relay system" evidence="7">
    <location>
        <position position="214"/>
    </location>
</feature>
<feature type="active site" description="Charge relay system" evidence="7">
    <location>
        <position position="376"/>
    </location>
</feature>
<feature type="site" description="Important for catalytic activity" evidence="2">
    <location>
        <position position="311"/>
    </location>
</feature>
<feature type="glycosylation site" description="N-linked (GlcNAc...) asparagine" evidence="6">
    <location>
        <position position="244"/>
    </location>
</feature>
<feature type="glycosylation site" description="N-linked (GlcNAc...) asparagine" evidence="6">
    <location>
        <position position="280"/>
    </location>
</feature>
<feature type="glycosylation site" description="N-linked (GlcNAc...) asparagine" evidence="6">
    <location>
        <position position="443"/>
    </location>
</feature>
<dbReference type="EC" id="3.4.21.-" evidence="4"/>
<dbReference type="EMBL" id="CM002799">
    <property type="protein sequence ID" value="KZN89274.1"/>
    <property type="molecule type" value="Genomic_DNA"/>
</dbReference>
<dbReference type="SMR" id="P9WEW6"/>
<dbReference type="Proteomes" id="UP000076449">
    <property type="component" value="Chromosome ii"/>
</dbReference>
<dbReference type="GO" id="GO:0019863">
    <property type="term" value="F:IgE binding"/>
    <property type="evidence" value="ECO:0007669"/>
    <property type="project" value="UniProtKB-KW"/>
</dbReference>
<dbReference type="GO" id="GO:0004252">
    <property type="term" value="F:serine-type endopeptidase activity"/>
    <property type="evidence" value="ECO:0000250"/>
    <property type="project" value="UniProtKB"/>
</dbReference>
<dbReference type="GO" id="GO:0006508">
    <property type="term" value="P:proteolysis"/>
    <property type="evidence" value="ECO:0000250"/>
    <property type="project" value="UniProtKB"/>
</dbReference>
<dbReference type="CDD" id="cd04077">
    <property type="entry name" value="Peptidases_S8_PCSK9_ProteinaseK_like"/>
    <property type="match status" value="1"/>
</dbReference>
<dbReference type="FunFam" id="3.30.70.80:FF:000006">
    <property type="entry name" value="Autophagic serine protease Alp2"/>
    <property type="match status" value="1"/>
</dbReference>
<dbReference type="FunFam" id="3.40.50.200:FF:000007">
    <property type="entry name" value="Subtilisin-like serine protease"/>
    <property type="match status" value="1"/>
</dbReference>
<dbReference type="Gene3D" id="3.30.70.80">
    <property type="entry name" value="Peptidase S8 propeptide/proteinase inhibitor I9"/>
    <property type="match status" value="1"/>
</dbReference>
<dbReference type="Gene3D" id="3.40.50.200">
    <property type="entry name" value="Peptidase S8/S53 domain"/>
    <property type="match status" value="1"/>
</dbReference>
<dbReference type="InterPro" id="IPR034193">
    <property type="entry name" value="PCSK9_ProteinaseK-like"/>
</dbReference>
<dbReference type="InterPro" id="IPR000209">
    <property type="entry name" value="Peptidase_S8/S53_dom"/>
</dbReference>
<dbReference type="InterPro" id="IPR036852">
    <property type="entry name" value="Peptidase_S8/S53_dom_sf"/>
</dbReference>
<dbReference type="InterPro" id="IPR022398">
    <property type="entry name" value="Peptidase_S8_His-AS"/>
</dbReference>
<dbReference type="InterPro" id="IPR023828">
    <property type="entry name" value="Peptidase_S8_Ser-AS"/>
</dbReference>
<dbReference type="InterPro" id="IPR050131">
    <property type="entry name" value="Peptidase_S8_subtilisin-like"/>
</dbReference>
<dbReference type="InterPro" id="IPR015500">
    <property type="entry name" value="Peptidase_S8_subtilisin-rel"/>
</dbReference>
<dbReference type="InterPro" id="IPR010259">
    <property type="entry name" value="S8pro/Inhibitor_I9"/>
</dbReference>
<dbReference type="InterPro" id="IPR037045">
    <property type="entry name" value="S8pro/Inhibitor_I9_sf"/>
</dbReference>
<dbReference type="PANTHER" id="PTHR43806:SF11">
    <property type="entry name" value="CEREVISIN-RELATED"/>
    <property type="match status" value="1"/>
</dbReference>
<dbReference type="PANTHER" id="PTHR43806">
    <property type="entry name" value="PEPTIDASE S8"/>
    <property type="match status" value="1"/>
</dbReference>
<dbReference type="Pfam" id="PF05922">
    <property type="entry name" value="Inhibitor_I9"/>
    <property type="match status" value="1"/>
</dbReference>
<dbReference type="Pfam" id="PF00082">
    <property type="entry name" value="Peptidase_S8"/>
    <property type="match status" value="1"/>
</dbReference>
<dbReference type="PRINTS" id="PR00723">
    <property type="entry name" value="SUBTILISIN"/>
</dbReference>
<dbReference type="SUPFAM" id="SSF54897">
    <property type="entry name" value="Protease propeptides/inhibitors"/>
    <property type="match status" value="1"/>
</dbReference>
<dbReference type="SUPFAM" id="SSF52743">
    <property type="entry name" value="Subtilisin-like"/>
    <property type="match status" value="1"/>
</dbReference>
<dbReference type="PROSITE" id="PS51892">
    <property type="entry name" value="SUBTILASE"/>
    <property type="match status" value="1"/>
</dbReference>
<dbReference type="PROSITE" id="PS00137">
    <property type="entry name" value="SUBTILASE_HIS"/>
    <property type="match status" value="1"/>
</dbReference>
<dbReference type="PROSITE" id="PS00138">
    <property type="entry name" value="SUBTILASE_SER"/>
    <property type="match status" value="1"/>
</dbReference>
<name>PCH18_PENCH</name>
<protein>
    <recommendedName>
        <fullName evidence="1">Subtilisin-like serine protease EN45_078720</fullName>
        <ecNumber evidence="4">3.4.21.-</ecNumber>
    </recommendedName>
    <alternativeName>
        <fullName evidence="1">Vacuolar serine protease</fullName>
    </alternativeName>
</protein>
<organism>
    <name type="scientific">Penicillium chrysogenum</name>
    <name type="common">Penicillium notatum</name>
    <dbReference type="NCBI Taxonomy" id="5076"/>
    <lineage>
        <taxon>Eukaryota</taxon>
        <taxon>Fungi</taxon>
        <taxon>Dikarya</taxon>
        <taxon>Ascomycota</taxon>
        <taxon>Pezizomycotina</taxon>
        <taxon>Eurotiomycetes</taxon>
        <taxon>Eurotiomycetidae</taxon>
        <taxon>Eurotiales</taxon>
        <taxon>Aspergillaceae</taxon>
        <taxon>Penicillium</taxon>
        <taxon>Penicillium chrysogenum species complex</taxon>
    </lineage>
</organism>
<gene>
    <name type="ORF">EN45_078720</name>
</gene>
<accession>P9WEW6</accession>
<accession>Q9HF04</accession>
<sequence>MKGFLSLTLLPLLVAASPVAVNSIHNDAAPILSSMTSKDIPDSYIVVFKKHVDPSSASAHQSWLQEVHTAHTGRMELKKRSLFGFDFEAFMGLKHTFHIAGSLLGYAGHFHEDVIEQIRRHPDVDYIEKDSEVRTMSEGSVEKNAPWGLARISHRESLSFGNFNKYLYAEEGGEGVDAYVIDTGANVKHVDFEGRANWGKTIPQGDADEDGNGHGTHCSGTIAGKKFGVAKKANVYAVKVLRSNGSGTMSDVVKGVEWAAEAHIKKSKKGDKKFKGSVANMSLGGGSSRTLDLAVNAAVDAGIHFAVAAGNDNADACNYSPAAAEKAITVGASTLADERAYFSNYGKCTDIFAPGLNILSTWVGSDHATNTISGTSMASPHIAGLLAYYVSLAPAKDSAYAVADVTPKQLKAALISVATEGTLTDIPSDTPNLLAWNGGGSANYTKILADGGYKAHNAETTVEDRIGGIIDSAEKAFHKELGAIYSEIKDAVSA</sequence>
<proteinExistence type="inferred from homology"/>